<protein>
    <recommendedName>
        <fullName evidence="2">Ribosomal large subunit pseudouridine synthase D</fullName>
        <ecNumber evidence="2">5.4.99.23</ecNumber>
    </recommendedName>
    <alternativeName>
        <fullName>23S rRNA pseudouridine(1911/1915/1917) synthase</fullName>
    </alternativeName>
    <alternativeName>
        <fullName>rRNA pseudouridylate synthase D</fullName>
    </alternativeName>
    <alternativeName>
        <fullName>rRNA-uridine isomerase D</fullName>
    </alternativeName>
</protein>
<organism>
    <name type="scientific">Escherichia coli O157:H7</name>
    <dbReference type="NCBI Taxonomy" id="83334"/>
    <lineage>
        <taxon>Bacteria</taxon>
        <taxon>Pseudomonadati</taxon>
        <taxon>Pseudomonadota</taxon>
        <taxon>Gammaproteobacteria</taxon>
        <taxon>Enterobacterales</taxon>
        <taxon>Enterobacteriaceae</taxon>
        <taxon>Escherichia</taxon>
    </lineage>
</organism>
<gene>
    <name type="primary">rluD</name>
    <name type="synonym">sfhB</name>
    <name type="ordered locus">Z3888</name>
    <name type="ordered locus">ECs3457</name>
</gene>
<accession>Q8X9F0</accession>
<keyword id="KW-0963">Cytoplasm</keyword>
<keyword id="KW-0413">Isomerase</keyword>
<keyword id="KW-1185">Reference proteome</keyword>
<keyword id="KW-0694">RNA-binding</keyword>
<keyword id="KW-0698">rRNA processing</keyword>
<sequence>MAQRVQLTATVSENQLGQRLDQALAEMFPDYSRSRIKEWILDQRVLVNGKLCDKPKEKVLGGEQVAINAEIEEEARFEPQDIPLDIVYEDEDIIVINKPRDLVVHPGAGNPDGTVLNALLHYYPPIADVPRAGIVHRLDKDTTGLMVVAKTVPAQTRLVESLQRREITREYEAVAIGHMTAGGTVDEPISRHPTKRTHMAVHPMGKPAVTHYRIMEHFRVHTRLRLRLETGRTHQIRVHMAHITHPLVGDPVYGGRPRPPKGASEAFISTLRKFDRQALHATMLRLYHPISGIEMEWHAPIPQDMVELIEVMRADFEEHKDEVDWL</sequence>
<dbReference type="EC" id="5.4.99.23" evidence="2"/>
<dbReference type="EMBL" id="AE005174">
    <property type="protein sequence ID" value="AAG57707.1"/>
    <property type="molecule type" value="Genomic_DNA"/>
</dbReference>
<dbReference type="EMBL" id="BA000007">
    <property type="protein sequence ID" value="BAB36880.1"/>
    <property type="molecule type" value="Genomic_DNA"/>
</dbReference>
<dbReference type="PIR" id="A91061">
    <property type="entry name" value="A91061"/>
</dbReference>
<dbReference type="PIR" id="G85905">
    <property type="entry name" value="G85905"/>
</dbReference>
<dbReference type="RefSeq" id="NP_311484.1">
    <property type="nucleotide sequence ID" value="NC_002695.1"/>
</dbReference>
<dbReference type="RefSeq" id="WP_000079092.1">
    <property type="nucleotide sequence ID" value="NZ_VOAI01000040.1"/>
</dbReference>
<dbReference type="SMR" id="Q8X9F0"/>
<dbReference type="STRING" id="155864.Z3888"/>
<dbReference type="GeneID" id="914863"/>
<dbReference type="KEGG" id="ece:Z3888"/>
<dbReference type="KEGG" id="ecs:ECs_3457"/>
<dbReference type="PATRIC" id="fig|386585.9.peg.3613"/>
<dbReference type="eggNOG" id="COG0564">
    <property type="taxonomic scope" value="Bacteria"/>
</dbReference>
<dbReference type="HOGENOM" id="CLU_016902_4_0_6"/>
<dbReference type="OMA" id="KSERAYT"/>
<dbReference type="BRENDA" id="5.4.99.23">
    <property type="organism ID" value="2026"/>
</dbReference>
<dbReference type="Proteomes" id="UP000000558">
    <property type="component" value="Chromosome"/>
</dbReference>
<dbReference type="Proteomes" id="UP000002519">
    <property type="component" value="Chromosome"/>
</dbReference>
<dbReference type="GO" id="GO:0005737">
    <property type="term" value="C:cytoplasm"/>
    <property type="evidence" value="ECO:0007669"/>
    <property type="project" value="UniProtKB-SubCell"/>
</dbReference>
<dbReference type="GO" id="GO:0160140">
    <property type="term" value="F:23S rRNA pseudouridine(1911/1915/1917) synthase activity"/>
    <property type="evidence" value="ECO:0007669"/>
    <property type="project" value="UniProtKB-EC"/>
</dbReference>
<dbReference type="GO" id="GO:0003723">
    <property type="term" value="F:RNA binding"/>
    <property type="evidence" value="ECO:0007669"/>
    <property type="project" value="UniProtKB-KW"/>
</dbReference>
<dbReference type="GO" id="GO:0000455">
    <property type="term" value="P:enzyme-directed rRNA pseudouridine synthesis"/>
    <property type="evidence" value="ECO:0007669"/>
    <property type="project" value="UniProtKB-ARBA"/>
</dbReference>
<dbReference type="CDD" id="cd02869">
    <property type="entry name" value="PseudoU_synth_RluA_like"/>
    <property type="match status" value="1"/>
</dbReference>
<dbReference type="CDD" id="cd00165">
    <property type="entry name" value="S4"/>
    <property type="match status" value="1"/>
</dbReference>
<dbReference type="FunFam" id="3.10.290.10:FF:000011">
    <property type="entry name" value="Pseudouridine synthase"/>
    <property type="match status" value="1"/>
</dbReference>
<dbReference type="FunFam" id="3.30.2350.10:FF:000004">
    <property type="entry name" value="Pseudouridine synthase"/>
    <property type="match status" value="1"/>
</dbReference>
<dbReference type="Gene3D" id="6.10.140.230">
    <property type="match status" value="1"/>
</dbReference>
<dbReference type="Gene3D" id="3.30.2350.10">
    <property type="entry name" value="Pseudouridine synthase"/>
    <property type="match status" value="1"/>
</dbReference>
<dbReference type="Gene3D" id="3.10.290.10">
    <property type="entry name" value="RNA-binding S4 domain"/>
    <property type="match status" value="1"/>
</dbReference>
<dbReference type="InterPro" id="IPR020103">
    <property type="entry name" value="PsdUridine_synth_cat_dom_sf"/>
</dbReference>
<dbReference type="InterPro" id="IPR006224">
    <property type="entry name" value="PsdUridine_synth_RluA-like_CS"/>
</dbReference>
<dbReference type="InterPro" id="IPR006225">
    <property type="entry name" value="PsdUridine_synth_RluC/D"/>
</dbReference>
<dbReference type="InterPro" id="IPR006145">
    <property type="entry name" value="PsdUridine_synth_RsuA/RluA"/>
</dbReference>
<dbReference type="InterPro" id="IPR050188">
    <property type="entry name" value="RluA_PseudoU_synthase"/>
</dbReference>
<dbReference type="InterPro" id="IPR002942">
    <property type="entry name" value="S4_RNA-bd"/>
</dbReference>
<dbReference type="InterPro" id="IPR036986">
    <property type="entry name" value="S4_RNA-bd_sf"/>
</dbReference>
<dbReference type="NCBIfam" id="NF008385">
    <property type="entry name" value="PRK11180.1"/>
    <property type="match status" value="1"/>
</dbReference>
<dbReference type="NCBIfam" id="TIGR00005">
    <property type="entry name" value="rluA_subfam"/>
    <property type="match status" value="1"/>
</dbReference>
<dbReference type="PANTHER" id="PTHR21600">
    <property type="entry name" value="MITOCHONDRIAL RNA PSEUDOURIDINE SYNTHASE"/>
    <property type="match status" value="1"/>
</dbReference>
<dbReference type="PANTHER" id="PTHR21600:SF44">
    <property type="entry name" value="RIBOSOMAL LARGE SUBUNIT PSEUDOURIDINE SYNTHASE D"/>
    <property type="match status" value="1"/>
</dbReference>
<dbReference type="Pfam" id="PF00849">
    <property type="entry name" value="PseudoU_synth_2"/>
    <property type="match status" value="1"/>
</dbReference>
<dbReference type="Pfam" id="PF01479">
    <property type="entry name" value="S4"/>
    <property type="match status" value="1"/>
</dbReference>
<dbReference type="SMART" id="SM00363">
    <property type="entry name" value="S4"/>
    <property type="match status" value="1"/>
</dbReference>
<dbReference type="SUPFAM" id="SSF55174">
    <property type="entry name" value="Alpha-L RNA-binding motif"/>
    <property type="match status" value="1"/>
</dbReference>
<dbReference type="SUPFAM" id="SSF55120">
    <property type="entry name" value="Pseudouridine synthase"/>
    <property type="match status" value="1"/>
</dbReference>
<dbReference type="PROSITE" id="PS01129">
    <property type="entry name" value="PSI_RLU"/>
    <property type="match status" value="1"/>
</dbReference>
<dbReference type="PROSITE" id="PS50889">
    <property type="entry name" value="S4"/>
    <property type="match status" value="1"/>
</dbReference>
<comment type="function">
    <text evidence="2">Responsible for synthesis of pseudouridine from uracil at positions 1911, 1915 and 1917 in 23S ribosomal RNA.</text>
</comment>
<comment type="catalytic activity">
    <reaction evidence="2">
        <text>uridine(1911/1915/1917) in 23S rRNA = pseudouridine(1911/1915/1917) in 23S rRNA</text>
        <dbReference type="Rhea" id="RHEA:42524"/>
        <dbReference type="Rhea" id="RHEA-COMP:10097"/>
        <dbReference type="Rhea" id="RHEA-COMP:10098"/>
        <dbReference type="ChEBI" id="CHEBI:65314"/>
        <dbReference type="ChEBI" id="CHEBI:65315"/>
        <dbReference type="EC" id="5.4.99.23"/>
    </reaction>
</comment>
<comment type="subcellular location">
    <subcellularLocation>
        <location evidence="2">Cytoplasm</location>
    </subcellularLocation>
    <text evidence="2">Associates with late stage pre-50S ribosomal subunits.</text>
</comment>
<comment type="similarity">
    <text evidence="4">Belongs to the pseudouridine synthase RluA family.</text>
</comment>
<feature type="initiator methionine" description="Removed" evidence="1">
    <location>
        <position position="1"/>
    </location>
</feature>
<feature type="chain" id="PRO_0000162690" description="Ribosomal large subunit pseudouridine synthase D">
    <location>
        <begin position="2"/>
        <end position="326"/>
    </location>
</feature>
<feature type="domain" description="S4 RNA-binding" evidence="3">
    <location>
        <begin position="18"/>
        <end position="91"/>
    </location>
</feature>
<feature type="active site" evidence="1">
    <location>
        <position position="139"/>
    </location>
</feature>
<proteinExistence type="inferred from homology"/>
<name>RLUD_ECO57</name>
<evidence type="ECO:0000250" key="1"/>
<evidence type="ECO:0000250" key="2">
    <source>
        <dbReference type="UniProtKB" id="P33643"/>
    </source>
</evidence>
<evidence type="ECO:0000255" key="3">
    <source>
        <dbReference type="PROSITE-ProRule" id="PRU00182"/>
    </source>
</evidence>
<evidence type="ECO:0000305" key="4"/>
<reference key="1">
    <citation type="journal article" date="2001" name="Nature">
        <title>Genome sequence of enterohaemorrhagic Escherichia coli O157:H7.</title>
        <authorList>
            <person name="Perna N.T."/>
            <person name="Plunkett G. III"/>
            <person name="Burland V."/>
            <person name="Mau B."/>
            <person name="Glasner J.D."/>
            <person name="Rose D.J."/>
            <person name="Mayhew G.F."/>
            <person name="Evans P.S."/>
            <person name="Gregor J."/>
            <person name="Kirkpatrick H.A."/>
            <person name="Posfai G."/>
            <person name="Hackett J."/>
            <person name="Klink S."/>
            <person name="Boutin A."/>
            <person name="Shao Y."/>
            <person name="Miller L."/>
            <person name="Grotbeck E.J."/>
            <person name="Davis N.W."/>
            <person name="Lim A."/>
            <person name="Dimalanta E.T."/>
            <person name="Potamousis K."/>
            <person name="Apodaca J."/>
            <person name="Anantharaman T.S."/>
            <person name="Lin J."/>
            <person name="Yen G."/>
            <person name="Schwartz D.C."/>
            <person name="Welch R.A."/>
            <person name="Blattner F.R."/>
        </authorList>
    </citation>
    <scope>NUCLEOTIDE SEQUENCE [LARGE SCALE GENOMIC DNA]</scope>
    <source>
        <strain>O157:H7 / EDL933 / ATCC 700927 / EHEC</strain>
    </source>
</reference>
<reference key="2">
    <citation type="journal article" date="2001" name="DNA Res.">
        <title>Complete genome sequence of enterohemorrhagic Escherichia coli O157:H7 and genomic comparison with a laboratory strain K-12.</title>
        <authorList>
            <person name="Hayashi T."/>
            <person name="Makino K."/>
            <person name="Ohnishi M."/>
            <person name="Kurokawa K."/>
            <person name="Ishii K."/>
            <person name="Yokoyama K."/>
            <person name="Han C.-G."/>
            <person name="Ohtsubo E."/>
            <person name="Nakayama K."/>
            <person name="Murata T."/>
            <person name="Tanaka M."/>
            <person name="Tobe T."/>
            <person name="Iida T."/>
            <person name="Takami H."/>
            <person name="Honda T."/>
            <person name="Sasakawa C."/>
            <person name="Ogasawara N."/>
            <person name="Yasunaga T."/>
            <person name="Kuhara S."/>
            <person name="Shiba T."/>
            <person name="Hattori M."/>
            <person name="Shinagawa H."/>
        </authorList>
    </citation>
    <scope>NUCLEOTIDE SEQUENCE [LARGE SCALE GENOMIC DNA]</scope>
    <source>
        <strain>O157:H7 / Sakai / RIMD 0509952 / EHEC</strain>
    </source>
</reference>